<proteinExistence type="inferred from homology"/>
<gene>
    <name evidence="1" type="primary">rnpA</name>
    <name type="ordered locus">PA0676</name>
</gene>
<protein>
    <recommendedName>
        <fullName evidence="1">Ribonuclease P protein component</fullName>
        <shortName evidence="1">RNase P protein</shortName>
        <shortName evidence="1">RNaseP protein</shortName>
        <ecNumber evidence="1">3.1.26.5</ecNumber>
    </recommendedName>
    <alternativeName>
        <fullName evidence="1">Protein C5</fullName>
    </alternativeName>
</protein>
<evidence type="ECO:0000255" key="1">
    <source>
        <dbReference type="HAMAP-Rule" id="MF_00227"/>
    </source>
</evidence>
<name>RNPA_PHYAS</name>
<comment type="function">
    <text evidence="1">RNaseP catalyzes the removal of the 5'-leader sequence from pre-tRNA to produce the mature 5'-terminus. It can also cleave other RNA substrates such as 4.5S RNA. The protein component plays an auxiliary but essential role in vivo by binding to the 5'-leader sequence and broadening the substrate specificity of the ribozyme.</text>
</comment>
<comment type="catalytic activity">
    <reaction evidence="1">
        <text>Endonucleolytic cleavage of RNA, removing 5'-extranucleotides from tRNA precursor.</text>
        <dbReference type="EC" id="3.1.26.5"/>
    </reaction>
</comment>
<comment type="subunit">
    <text evidence="1">Consists of a catalytic RNA component (M1 or rnpB) and a protein subunit.</text>
</comment>
<comment type="similarity">
    <text evidence="1">Belongs to the RnpA family.</text>
</comment>
<reference key="1">
    <citation type="journal article" date="2008" name="J. Bacteriol.">
        <title>Comparative genome analysis of 'Candidatus Phytoplasma australiense' (subgroup tuf-Australia I; rp-A) and 'Ca. Phytoplasma asteris' strains OY-M and AY-WB.</title>
        <authorList>
            <person name="Tran-Nguyen L.T."/>
            <person name="Kube M."/>
            <person name="Schneider B."/>
            <person name="Reinhardt R."/>
            <person name="Gibb K.S."/>
        </authorList>
    </citation>
    <scope>NUCLEOTIDE SEQUENCE [LARGE SCALE GENOMIC DNA]</scope>
</reference>
<dbReference type="EC" id="3.1.26.5" evidence="1"/>
<dbReference type="EMBL" id="AM422018">
    <property type="protein sequence ID" value="CAM12010.1"/>
    <property type="molecule type" value="Genomic_DNA"/>
</dbReference>
<dbReference type="SMR" id="B1VAN7"/>
<dbReference type="STRING" id="59748.PA0676"/>
<dbReference type="KEGG" id="pal:PA0676"/>
<dbReference type="eggNOG" id="COG0594">
    <property type="taxonomic scope" value="Bacteria"/>
</dbReference>
<dbReference type="Proteomes" id="UP000008323">
    <property type="component" value="Chromosome"/>
</dbReference>
<dbReference type="GO" id="GO:0030677">
    <property type="term" value="C:ribonuclease P complex"/>
    <property type="evidence" value="ECO:0007669"/>
    <property type="project" value="TreeGrafter"/>
</dbReference>
<dbReference type="GO" id="GO:0042781">
    <property type="term" value="F:3'-tRNA processing endoribonuclease activity"/>
    <property type="evidence" value="ECO:0007669"/>
    <property type="project" value="TreeGrafter"/>
</dbReference>
<dbReference type="GO" id="GO:0004526">
    <property type="term" value="F:ribonuclease P activity"/>
    <property type="evidence" value="ECO:0007669"/>
    <property type="project" value="UniProtKB-UniRule"/>
</dbReference>
<dbReference type="GO" id="GO:0000049">
    <property type="term" value="F:tRNA binding"/>
    <property type="evidence" value="ECO:0007669"/>
    <property type="project" value="UniProtKB-UniRule"/>
</dbReference>
<dbReference type="GO" id="GO:0001682">
    <property type="term" value="P:tRNA 5'-leader removal"/>
    <property type="evidence" value="ECO:0007669"/>
    <property type="project" value="UniProtKB-UniRule"/>
</dbReference>
<dbReference type="Gene3D" id="3.30.230.10">
    <property type="match status" value="1"/>
</dbReference>
<dbReference type="HAMAP" id="MF_00227">
    <property type="entry name" value="RNase_P"/>
    <property type="match status" value="1"/>
</dbReference>
<dbReference type="InterPro" id="IPR020568">
    <property type="entry name" value="Ribosomal_Su5_D2-typ_SF"/>
</dbReference>
<dbReference type="InterPro" id="IPR014721">
    <property type="entry name" value="Ribsml_uS5_D2-typ_fold_subgr"/>
</dbReference>
<dbReference type="InterPro" id="IPR000100">
    <property type="entry name" value="RNase_P"/>
</dbReference>
<dbReference type="InterPro" id="IPR020539">
    <property type="entry name" value="RNase_P_CS"/>
</dbReference>
<dbReference type="NCBIfam" id="TIGR00188">
    <property type="entry name" value="rnpA"/>
    <property type="match status" value="1"/>
</dbReference>
<dbReference type="PANTHER" id="PTHR33992">
    <property type="entry name" value="RIBONUCLEASE P PROTEIN COMPONENT"/>
    <property type="match status" value="1"/>
</dbReference>
<dbReference type="PANTHER" id="PTHR33992:SF1">
    <property type="entry name" value="RIBONUCLEASE P PROTEIN COMPONENT"/>
    <property type="match status" value="1"/>
</dbReference>
<dbReference type="Pfam" id="PF00825">
    <property type="entry name" value="Ribonuclease_P"/>
    <property type="match status" value="1"/>
</dbReference>
<dbReference type="SUPFAM" id="SSF54211">
    <property type="entry name" value="Ribosomal protein S5 domain 2-like"/>
    <property type="match status" value="1"/>
</dbReference>
<dbReference type="PROSITE" id="PS00648">
    <property type="entry name" value="RIBONUCLEASE_P"/>
    <property type="match status" value="1"/>
</dbReference>
<sequence>MKRKYILKKESEITAVFRSKKRCGNSSFIIYYSKQNVNTYFKFALSVGKKYGKAHERNLIKRRLRAIIRNYSSNLNPAFFFVIVIKPPAKNLTFQQLKTTFAKFASKINLLLSNN</sequence>
<organism>
    <name type="scientific">Phytoplasma australiense</name>
    <dbReference type="NCBI Taxonomy" id="59748"/>
    <lineage>
        <taxon>Bacteria</taxon>
        <taxon>Bacillati</taxon>
        <taxon>Mycoplasmatota</taxon>
        <taxon>Mollicutes</taxon>
        <taxon>Acholeplasmatales</taxon>
        <taxon>Acholeplasmataceae</taxon>
        <taxon>Candidatus Phytoplasma</taxon>
        <taxon>16SrXII (Stolbur group)</taxon>
    </lineage>
</organism>
<feature type="chain" id="PRO_1000194653" description="Ribonuclease P protein component">
    <location>
        <begin position="1"/>
        <end position="115"/>
    </location>
</feature>
<keyword id="KW-0255">Endonuclease</keyword>
<keyword id="KW-0378">Hydrolase</keyword>
<keyword id="KW-0540">Nuclease</keyword>
<keyword id="KW-1185">Reference proteome</keyword>
<keyword id="KW-0694">RNA-binding</keyword>
<keyword id="KW-0819">tRNA processing</keyword>
<accession>B1VAN7</accession>